<sequence length="567" mass="59431">MTEPTSRPDIKPRSRDVTDGLEKAAARGMLRAVGMGDEDFAKPQIGVGSSWNEITPCNLSLDRLAKAVKNGVHAAGGYPLEFGTISVSDGISMGHEGMHFSLVSREVIADSVETVMMAERLDGSVLLAGCDKSLPGMMMAAARLDLASVFLYAGSTMPGQVDGNDVTIIDAFEAVGACLAGKISRDEVDRIERAICPGEGACGGMYTANTMASIAEAIGMSLPGSAAPPAVDRRRDGFAHRSGEAVVNLLRQGITARQIMTRAAFENAITVAMALGGSTNAVLHLLAMAREADVDLTIDDFNRIGDKVPHLGDLKPFGKYVMNDVDKIGGIPVVMKALLDAGLMHGDALTVTGKTLAENLAELAPPELDDEVIRKLDRPIHKTGGLTILKGSLAPEGAVVKTAGFDDSVFTGTARVFDGERAAMDALEAGQIQPRDVVVIRYEGPKGGPGMREMLAITGAIKGAGLGKDVLLITDGRFSGGTTGLCVGHIAPEAVDGGPIAFVRDGDQITLDVANRLLEVEVVGPDAEAEWERRKVGWEPNPPKYTRGVLGKYAKIVQSAAHGAITG</sequence>
<name>ILVD_NOCSJ</name>
<proteinExistence type="inferred from homology"/>
<reference key="1">
    <citation type="submission" date="2006-12" db="EMBL/GenBank/DDBJ databases">
        <title>Complete sequence of chromosome 1 of Nocardioides sp. JS614.</title>
        <authorList>
            <person name="Copeland A."/>
            <person name="Lucas S."/>
            <person name="Lapidus A."/>
            <person name="Barry K."/>
            <person name="Detter J.C."/>
            <person name="Glavina del Rio T."/>
            <person name="Hammon N."/>
            <person name="Israni S."/>
            <person name="Dalin E."/>
            <person name="Tice H."/>
            <person name="Pitluck S."/>
            <person name="Thompson L.S."/>
            <person name="Brettin T."/>
            <person name="Bruce D."/>
            <person name="Han C."/>
            <person name="Tapia R."/>
            <person name="Schmutz J."/>
            <person name="Larimer F."/>
            <person name="Land M."/>
            <person name="Hauser L."/>
            <person name="Kyrpides N."/>
            <person name="Kim E."/>
            <person name="Mattes T."/>
            <person name="Gossett J."/>
            <person name="Richardson P."/>
        </authorList>
    </citation>
    <scope>NUCLEOTIDE SEQUENCE [LARGE SCALE GENOMIC DNA]</scope>
    <source>
        <strain>ATCC BAA-499 / JS614</strain>
    </source>
</reference>
<keyword id="KW-0001">2Fe-2S</keyword>
<keyword id="KW-0028">Amino-acid biosynthesis</keyword>
<keyword id="KW-0100">Branched-chain amino acid biosynthesis</keyword>
<keyword id="KW-0408">Iron</keyword>
<keyword id="KW-0411">Iron-sulfur</keyword>
<keyword id="KW-0456">Lyase</keyword>
<keyword id="KW-0460">Magnesium</keyword>
<keyword id="KW-0479">Metal-binding</keyword>
<keyword id="KW-1185">Reference proteome</keyword>
<accession>A1SM84</accession>
<protein>
    <recommendedName>
        <fullName evidence="1">Dihydroxy-acid dehydratase</fullName>
        <shortName evidence="1">DAD</shortName>
        <ecNumber evidence="1">4.2.1.9</ecNumber>
    </recommendedName>
</protein>
<dbReference type="EC" id="4.2.1.9" evidence="1"/>
<dbReference type="EMBL" id="CP000509">
    <property type="protein sequence ID" value="ABL82919.1"/>
    <property type="molecule type" value="Genomic_DNA"/>
</dbReference>
<dbReference type="RefSeq" id="WP_011756853.1">
    <property type="nucleotide sequence ID" value="NC_008699.1"/>
</dbReference>
<dbReference type="SMR" id="A1SM84"/>
<dbReference type="STRING" id="196162.Noca_3419"/>
<dbReference type="KEGG" id="nca:Noca_3419"/>
<dbReference type="eggNOG" id="COG0129">
    <property type="taxonomic scope" value="Bacteria"/>
</dbReference>
<dbReference type="HOGENOM" id="CLU_014271_4_2_11"/>
<dbReference type="OrthoDB" id="9807077at2"/>
<dbReference type="UniPathway" id="UPA00047">
    <property type="reaction ID" value="UER00057"/>
</dbReference>
<dbReference type="UniPathway" id="UPA00049">
    <property type="reaction ID" value="UER00061"/>
</dbReference>
<dbReference type="Proteomes" id="UP000000640">
    <property type="component" value="Chromosome"/>
</dbReference>
<dbReference type="GO" id="GO:0051537">
    <property type="term" value="F:2 iron, 2 sulfur cluster binding"/>
    <property type="evidence" value="ECO:0007669"/>
    <property type="project" value="UniProtKB-UniRule"/>
</dbReference>
<dbReference type="GO" id="GO:0004160">
    <property type="term" value="F:dihydroxy-acid dehydratase activity"/>
    <property type="evidence" value="ECO:0007669"/>
    <property type="project" value="UniProtKB-UniRule"/>
</dbReference>
<dbReference type="GO" id="GO:0000287">
    <property type="term" value="F:magnesium ion binding"/>
    <property type="evidence" value="ECO:0007669"/>
    <property type="project" value="UniProtKB-UniRule"/>
</dbReference>
<dbReference type="GO" id="GO:0009097">
    <property type="term" value="P:isoleucine biosynthetic process"/>
    <property type="evidence" value="ECO:0007669"/>
    <property type="project" value="UniProtKB-UniRule"/>
</dbReference>
<dbReference type="GO" id="GO:0009099">
    <property type="term" value="P:L-valine biosynthetic process"/>
    <property type="evidence" value="ECO:0007669"/>
    <property type="project" value="UniProtKB-UniRule"/>
</dbReference>
<dbReference type="FunFam" id="3.50.30.80:FF:000001">
    <property type="entry name" value="Dihydroxy-acid dehydratase"/>
    <property type="match status" value="1"/>
</dbReference>
<dbReference type="Gene3D" id="3.50.30.80">
    <property type="entry name" value="IlvD/EDD C-terminal domain-like"/>
    <property type="match status" value="1"/>
</dbReference>
<dbReference type="HAMAP" id="MF_00012">
    <property type="entry name" value="IlvD"/>
    <property type="match status" value="1"/>
</dbReference>
<dbReference type="InterPro" id="IPR050165">
    <property type="entry name" value="DHAD_IlvD/Edd"/>
</dbReference>
<dbReference type="InterPro" id="IPR042096">
    <property type="entry name" value="Dihydro-acid_dehy_C"/>
</dbReference>
<dbReference type="InterPro" id="IPR004404">
    <property type="entry name" value="DihydroxyA_deHydtase"/>
</dbReference>
<dbReference type="InterPro" id="IPR020558">
    <property type="entry name" value="DiOHA_6PGluconate_deHydtase_CS"/>
</dbReference>
<dbReference type="InterPro" id="IPR056740">
    <property type="entry name" value="ILV_EDD_C"/>
</dbReference>
<dbReference type="InterPro" id="IPR000581">
    <property type="entry name" value="ILV_EDD_N"/>
</dbReference>
<dbReference type="InterPro" id="IPR037237">
    <property type="entry name" value="IlvD/EDD_N"/>
</dbReference>
<dbReference type="NCBIfam" id="TIGR00110">
    <property type="entry name" value="ilvD"/>
    <property type="match status" value="1"/>
</dbReference>
<dbReference type="NCBIfam" id="NF002068">
    <property type="entry name" value="PRK00911.1"/>
    <property type="match status" value="1"/>
</dbReference>
<dbReference type="PANTHER" id="PTHR21000">
    <property type="entry name" value="DIHYDROXY-ACID DEHYDRATASE DAD"/>
    <property type="match status" value="1"/>
</dbReference>
<dbReference type="PANTHER" id="PTHR21000:SF5">
    <property type="entry name" value="DIHYDROXY-ACID DEHYDRATASE, MITOCHONDRIAL"/>
    <property type="match status" value="1"/>
</dbReference>
<dbReference type="Pfam" id="PF24877">
    <property type="entry name" value="ILV_EDD_C"/>
    <property type="match status" value="1"/>
</dbReference>
<dbReference type="Pfam" id="PF00920">
    <property type="entry name" value="ILVD_EDD_N"/>
    <property type="match status" value="1"/>
</dbReference>
<dbReference type="SUPFAM" id="SSF143975">
    <property type="entry name" value="IlvD/EDD N-terminal domain-like"/>
    <property type="match status" value="1"/>
</dbReference>
<dbReference type="SUPFAM" id="SSF52016">
    <property type="entry name" value="LeuD/IlvD-like"/>
    <property type="match status" value="1"/>
</dbReference>
<dbReference type="PROSITE" id="PS00886">
    <property type="entry name" value="ILVD_EDD_1"/>
    <property type="match status" value="1"/>
</dbReference>
<dbReference type="PROSITE" id="PS00887">
    <property type="entry name" value="ILVD_EDD_2"/>
    <property type="match status" value="1"/>
</dbReference>
<evidence type="ECO:0000255" key="1">
    <source>
        <dbReference type="HAMAP-Rule" id="MF_00012"/>
    </source>
</evidence>
<gene>
    <name evidence="1" type="primary">ilvD</name>
    <name type="ordered locus">Noca_3419</name>
</gene>
<feature type="chain" id="PRO_0000321600" description="Dihydroxy-acid dehydratase">
    <location>
        <begin position="1"/>
        <end position="567"/>
    </location>
</feature>
<feature type="active site" description="Proton acceptor" evidence="1">
    <location>
        <position position="479"/>
    </location>
</feature>
<feature type="binding site" evidence="1">
    <location>
        <position position="57"/>
    </location>
    <ligand>
        <name>[2Fe-2S] cluster</name>
        <dbReference type="ChEBI" id="CHEBI:190135"/>
    </ligand>
</feature>
<feature type="binding site" evidence="1">
    <location>
        <position position="89"/>
    </location>
    <ligand>
        <name>Mg(2+)</name>
        <dbReference type="ChEBI" id="CHEBI:18420"/>
    </ligand>
</feature>
<feature type="binding site" evidence="1">
    <location>
        <position position="130"/>
    </location>
    <ligand>
        <name>[2Fe-2S] cluster</name>
        <dbReference type="ChEBI" id="CHEBI:190135"/>
    </ligand>
</feature>
<feature type="binding site" evidence="1">
    <location>
        <position position="131"/>
    </location>
    <ligand>
        <name>Mg(2+)</name>
        <dbReference type="ChEBI" id="CHEBI:18420"/>
    </ligand>
</feature>
<feature type="binding site" description="via carbamate group" evidence="1">
    <location>
        <position position="132"/>
    </location>
    <ligand>
        <name>Mg(2+)</name>
        <dbReference type="ChEBI" id="CHEBI:18420"/>
    </ligand>
</feature>
<feature type="binding site" evidence="1">
    <location>
        <position position="202"/>
    </location>
    <ligand>
        <name>[2Fe-2S] cluster</name>
        <dbReference type="ChEBI" id="CHEBI:190135"/>
    </ligand>
</feature>
<feature type="binding site" evidence="1">
    <location>
        <position position="453"/>
    </location>
    <ligand>
        <name>Mg(2+)</name>
        <dbReference type="ChEBI" id="CHEBI:18420"/>
    </ligand>
</feature>
<feature type="modified residue" description="N6-carboxylysine" evidence="1">
    <location>
        <position position="132"/>
    </location>
</feature>
<comment type="function">
    <text evidence="1">Functions in the biosynthesis of branched-chain amino acids. Catalyzes the dehydration of (2R,3R)-2,3-dihydroxy-3-methylpentanoate (2,3-dihydroxy-3-methylvalerate) into 2-oxo-3-methylpentanoate (2-oxo-3-methylvalerate) and of (2R)-2,3-dihydroxy-3-methylbutanoate (2,3-dihydroxyisovalerate) into 2-oxo-3-methylbutanoate (2-oxoisovalerate), the penultimate precursor to L-isoleucine and L-valine, respectively.</text>
</comment>
<comment type="catalytic activity">
    <reaction evidence="1">
        <text>(2R)-2,3-dihydroxy-3-methylbutanoate = 3-methyl-2-oxobutanoate + H2O</text>
        <dbReference type="Rhea" id="RHEA:24809"/>
        <dbReference type="ChEBI" id="CHEBI:11851"/>
        <dbReference type="ChEBI" id="CHEBI:15377"/>
        <dbReference type="ChEBI" id="CHEBI:49072"/>
        <dbReference type="EC" id="4.2.1.9"/>
    </reaction>
    <physiologicalReaction direction="left-to-right" evidence="1">
        <dbReference type="Rhea" id="RHEA:24810"/>
    </physiologicalReaction>
</comment>
<comment type="catalytic activity">
    <reaction evidence="1">
        <text>(2R,3R)-2,3-dihydroxy-3-methylpentanoate = (S)-3-methyl-2-oxopentanoate + H2O</text>
        <dbReference type="Rhea" id="RHEA:27694"/>
        <dbReference type="ChEBI" id="CHEBI:15377"/>
        <dbReference type="ChEBI" id="CHEBI:35146"/>
        <dbReference type="ChEBI" id="CHEBI:49258"/>
        <dbReference type="EC" id="4.2.1.9"/>
    </reaction>
    <physiologicalReaction direction="left-to-right" evidence="1">
        <dbReference type="Rhea" id="RHEA:27695"/>
    </physiologicalReaction>
</comment>
<comment type="cofactor">
    <cofactor evidence="1">
        <name>[2Fe-2S] cluster</name>
        <dbReference type="ChEBI" id="CHEBI:190135"/>
    </cofactor>
    <text evidence="1">Binds 1 [2Fe-2S] cluster per subunit. This cluster acts as a Lewis acid cofactor.</text>
</comment>
<comment type="cofactor">
    <cofactor evidence="1">
        <name>Mg(2+)</name>
        <dbReference type="ChEBI" id="CHEBI:18420"/>
    </cofactor>
</comment>
<comment type="pathway">
    <text evidence="1">Amino-acid biosynthesis; L-isoleucine biosynthesis; L-isoleucine from 2-oxobutanoate: step 3/4.</text>
</comment>
<comment type="pathway">
    <text evidence="1">Amino-acid biosynthesis; L-valine biosynthesis; L-valine from pyruvate: step 3/4.</text>
</comment>
<comment type="subunit">
    <text evidence="1">Homodimer.</text>
</comment>
<comment type="similarity">
    <text evidence="1">Belongs to the IlvD/Edd family.</text>
</comment>
<organism>
    <name type="scientific">Nocardioides sp. (strain ATCC BAA-499 / JS614)</name>
    <dbReference type="NCBI Taxonomy" id="196162"/>
    <lineage>
        <taxon>Bacteria</taxon>
        <taxon>Bacillati</taxon>
        <taxon>Actinomycetota</taxon>
        <taxon>Actinomycetes</taxon>
        <taxon>Propionibacteriales</taxon>
        <taxon>Nocardioidaceae</taxon>
        <taxon>Nocardioides</taxon>
    </lineage>
</organism>